<keyword id="KW-0021">Allosteric enzyme</keyword>
<keyword id="KW-0963">Cytoplasm</keyword>
<keyword id="KW-0378">Hydrolase</keyword>
<keyword id="KW-0479">Metal-binding</keyword>
<keyword id="KW-0645">Protease</keyword>
<keyword id="KW-1185">Reference proteome</keyword>
<keyword id="KW-0915">Sodium</keyword>
<keyword id="KW-0888">Threonine protease</keyword>
<reference key="1">
    <citation type="journal article" date="2005" name="PLoS Biol.">
        <title>The Wolbachia genome of Brugia malayi: endosymbiont evolution within a human pathogenic nematode.</title>
        <authorList>
            <person name="Foster J."/>
            <person name="Ganatra M."/>
            <person name="Kamal I."/>
            <person name="Ware J."/>
            <person name="Makarova K."/>
            <person name="Ivanova N."/>
            <person name="Bhattacharyya A."/>
            <person name="Kapatral V."/>
            <person name="Kumar S."/>
            <person name="Posfai J."/>
            <person name="Vincze T."/>
            <person name="Ingram J."/>
            <person name="Moran L."/>
            <person name="Lapidus A."/>
            <person name="Omelchenko M."/>
            <person name="Kyrpides N."/>
            <person name="Ghedin E."/>
            <person name="Wang S."/>
            <person name="Goltsman E."/>
            <person name="Joukov V."/>
            <person name="Ostrovskaya O."/>
            <person name="Tsukerman K."/>
            <person name="Mazur M."/>
            <person name="Comb D."/>
            <person name="Koonin E."/>
            <person name="Slatko B."/>
        </authorList>
    </citation>
    <scope>NUCLEOTIDE SEQUENCE [LARGE SCALE GENOMIC DNA]</scope>
    <source>
        <strain>TRS</strain>
    </source>
</reference>
<comment type="function">
    <text evidence="1">Protease subunit of a proteasome-like degradation complex believed to be a general protein degrading machinery.</text>
</comment>
<comment type="catalytic activity">
    <reaction evidence="1">
        <text>ATP-dependent cleavage of peptide bonds with broad specificity.</text>
        <dbReference type="EC" id="3.4.25.2"/>
    </reaction>
</comment>
<comment type="activity regulation">
    <text evidence="1">Allosterically activated by HslU binding.</text>
</comment>
<comment type="subunit">
    <text evidence="1">A double ring-shaped homohexamer of HslV is capped on each side by a ring-shaped HslU homohexamer. The assembly of the HslU/HslV complex is dependent on binding of ATP.</text>
</comment>
<comment type="subcellular location">
    <subcellularLocation>
        <location evidence="1">Cytoplasm</location>
    </subcellularLocation>
</comment>
<comment type="similarity">
    <text evidence="1">Belongs to the peptidase T1B family. HslV subfamily.</text>
</comment>
<evidence type="ECO:0000255" key="1">
    <source>
        <dbReference type="HAMAP-Rule" id="MF_00248"/>
    </source>
</evidence>
<feature type="chain" id="PRO_0000336805" description="ATP-dependent protease subunit HslV">
    <location>
        <begin position="1"/>
        <end position="176"/>
    </location>
</feature>
<feature type="active site" evidence="1">
    <location>
        <position position="4"/>
    </location>
</feature>
<feature type="binding site" evidence="1">
    <location>
        <position position="159"/>
    </location>
    <ligand>
        <name>Na(+)</name>
        <dbReference type="ChEBI" id="CHEBI:29101"/>
    </ligand>
</feature>
<feature type="binding site" evidence="1">
    <location>
        <position position="162"/>
    </location>
    <ligand>
        <name>Na(+)</name>
        <dbReference type="ChEBI" id="CHEBI:29101"/>
    </ligand>
</feature>
<feature type="binding site" evidence="1">
    <location>
        <position position="165"/>
    </location>
    <ligand>
        <name>Na(+)</name>
        <dbReference type="ChEBI" id="CHEBI:29101"/>
    </ligand>
</feature>
<name>HSLV_WOLTR</name>
<proteinExistence type="inferred from homology"/>
<accession>Q5GRR4</accession>
<gene>
    <name evidence="1" type="primary">hslV</name>
    <name type="ordered locus">Wbm0722</name>
</gene>
<organism>
    <name type="scientific">Wolbachia sp. subsp. Brugia malayi (strain TRS)</name>
    <dbReference type="NCBI Taxonomy" id="292805"/>
    <lineage>
        <taxon>Bacteria</taxon>
        <taxon>Pseudomonadati</taxon>
        <taxon>Pseudomonadota</taxon>
        <taxon>Alphaproteobacteria</taxon>
        <taxon>Rickettsiales</taxon>
        <taxon>Anaplasmataceae</taxon>
        <taxon>Wolbachieae</taxon>
        <taxon>Wolbachia</taxon>
    </lineage>
</organism>
<protein>
    <recommendedName>
        <fullName evidence="1">ATP-dependent protease subunit HslV</fullName>
        <ecNumber evidence="1">3.4.25.2</ecNumber>
    </recommendedName>
</protein>
<sequence length="176" mass="18822">MYGTTILSIRKDKSVIVIGDGQVSLGHTVIKSGAKKVRRLSSDSVIAGFAGATADAFTLFERLESKLDKHPGQLMRACVELAKDWRMDKYLRKLEAMMIVADKSISLVITGTGDVLEPEDGIAAIGSGGNFALSAAKALIDIKGISIEEIAKKAMKIAADICVYTNHNVVVEKIEG</sequence>
<dbReference type="EC" id="3.4.25.2" evidence="1"/>
<dbReference type="EMBL" id="AE017321">
    <property type="protein sequence ID" value="AAW71310.1"/>
    <property type="molecule type" value="Genomic_DNA"/>
</dbReference>
<dbReference type="SMR" id="Q5GRR4"/>
<dbReference type="STRING" id="292805.Wbm0722"/>
<dbReference type="MEROPS" id="T01.006"/>
<dbReference type="KEGG" id="wbm:Wbm0722"/>
<dbReference type="eggNOG" id="COG5405">
    <property type="taxonomic scope" value="Bacteria"/>
</dbReference>
<dbReference type="HOGENOM" id="CLU_093872_1_0_5"/>
<dbReference type="Proteomes" id="UP000000534">
    <property type="component" value="Chromosome"/>
</dbReference>
<dbReference type="GO" id="GO:0009376">
    <property type="term" value="C:HslUV protease complex"/>
    <property type="evidence" value="ECO:0007669"/>
    <property type="project" value="UniProtKB-UniRule"/>
</dbReference>
<dbReference type="GO" id="GO:0005839">
    <property type="term" value="C:proteasome core complex"/>
    <property type="evidence" value="ECO:0007669"/>
    <property type="project" value="InterPro"/>
</dbReference>
<dbReference type="GO" id="GO:0046872">
    <property type="term" value="F:metal ion binding"/>
    <property type="evidence" value="ECO:0007669"/>
    <property type="project" value="UniProtKB-KW"/>
</dbReference>
<dbReference type="GO" id="GO:0004298">
    <property type="term" value="F:threonine-type endopeptidase activity"/>
    <property type="evidence" value="ECO:0007669"/>
    <property type="project" value="UniProtKB-KW"/>
</dbReference>
<dbReference type="GO" id="GO:0051603">
    <property type="term" value="P:proteolysis involved in protein catabolic process"/>
    <property type="evidence" value="ECO:0007669"/>
    <property type="project" value="InterPro"/>
</dbReference>
<dbReference type="CDD" id="cd01913">
    <property type="entry name" value="protease_HslV"/>
    <property type="match status" value="1"/>
</dbReference>
<dbReference type="FunFam" id="3.60.20.10:FF:000002">
    <property type="entry name" value="ATP-dependent protease subunit HslV"/>
    <property type="match status" value="1"/>
</dbReference>
<dbReference type="Gene3D" id="3.60.20.10">
    <property type="entry name" value="Glutamine Phosphoribosylpyrophosphate, subunit 1, domain 1"/>
    <property type="match status" value="1"/>
</dbReference>
<dbReference type="HAMAP" id="MF_00248">
    <property type="entry name" value="HslV"/>
    <property type="match status" value="1"/>
</dbReference>
<dbReference type="InterPro" id="IPR022281">
    <property type="entry name" value="ATP-dep_Prtase_HsIV_su"/>
</dbReference>
<dbReference type="InterPro" id="IPR029055">
    <property type="entry name" value="Ntn_hydrolases_N"/>
</dbReference>
<dbReference type="InterPro" id="IPR001353">
    <property type="entry name" value="Proteasome_sua/b"/>
</dbReference>
<dbReference type="InterPro" id="IPR023333">
    <property type="entry name" value="Proteasome_suB-type"/>
</dbReference>
<dbReference type="NCBIfam" id="TIGR03692">
    <property type="entry name" value="ATP_dep_HslV"/>
    <property type="match status" value="1"/>
</dbReference>
<dbReference type="NCBIfam" id="NF003964">
    <property type="entry name" value="PRK05456.1"/>
    <property type="match status" value="1"/>
</dbReference>
<dbReference type="PANTHER" id="PTHR32194:SF7">
    <property type="entry name" value="ATP-DEPENDENT PROTEASE SUBUNIT HSLV"/>
    <property type="match status" value="1"/>
</dbReference>
<dbReference type="PANTHER" id="PTHR32194">
    <property type="entry name" value="METALLOPROTEASE TLDD"/>
    <property type="match status" value="1"/>
</dbReference>
<dbReference type="Pfam" id="PF00227">
    <property type="entry name" value="Proteasome"/>
    <property type="match status" value="1"/>
</dbReference>
<dbReference type="PIRSF" id="PIRSF039093">
    <property type="entry name" value="HslV"/>
    <property type="match status" value="1"/>
</dbReference>
<dbReference type="SUPFAM" id="SSF56235">
    <property type="entry name" value="N-terminal nucleophile aminohydrolases (Ntn hydrolases)"/>
    <property type="match status" value="1"/>
</dbReference>
<dbReference type="PROSITE" id="PS51476">
    <property type="entry name" value="PROTEASOME_BETA_2"/>
    <property type="match status" value="1"/>
</dbReference>